<sequence length="98" mass="10264">MVWHGFLAKAVPTVVTGAVGVAAYEALRKMVVKAPLRAATVSVAAWGIRLAREAERKAGESAEQARLMFADVLAEASERAGEEVPPLAVAGSDDGHDH</sequence>
<evidence type="ECO:0000256" key="1">
    <source>
        <dbReference type="SAM" id="MobiDB-lite"/>
    </source>
</evidence>
<evidence type="ECO:0000305" key="2"/>
<organism>
    <name type="scientific">Mycobacterium tuberculosis (strain CDC 1551 / Oshkosh)</name>
    <dbReference type="NCBI Taxonomy" id="83331"/>
    <lineage>
        <taxon>Bacteria</taxon>
        <taxon>Bacillati</taxon>
        <taxon>Actinomycetota</taxon>
        <taxon>Actinomycetes</taxon>
        <taxon>Mycobacteriales</taxon>
        <taxon>Mycobacteriaceae</taxon>
        <taxon>Mycobacterium</taxon>
        <taxon>Mycobacterium tuberculosis complex</taxon>
    </lineage>
</organism>
<protein>
    <recommendedName>
        <fullName>Uncharacterized protein MT0996</fullName>
    </recommendedName>
</protein>
<dbReference type="EMBL" id="AE000516">
    <property type="protein sequence ID" value="AAK45245.1"/>
    <property type="status" value="ALT_INIT"/>
    <property type="molecule type" value="Genomic_DNA"/>
</dbReference>
<dbReference type="PIR" id="F70718">
    <property type="entry name" value="F70718"/>
</dbReference>
<dbReference type="RefSeq" id="WP_003404939.1">
    <property type="nucleotide sequence ID" value="NZ_KK341227.1"/>
</dbReference>
<dbReference type="SMR" id="P9WKL8"/>
<dbReference type="KEGG" id="mtc:MT0996"/>
<dbReference type="PATRIC" id="fig|83331.31.peg.1068"/>
<dbReference type="HOGENOM" id="CLU_149299_0_0_11"/>
<dbReference type="Proteomes" id="UP000001020">
    <property type="component" value="Chromosome"/>
</dbReference>
<dbReference type="InterPro" id="IPR009963">
    <property type="entry name" value="DUF1490"/>
</dbReference>
<dbReference type="Pfam" id="PF07371">
    <property type="entry name" value="DUF1490"/>
    <property type="match status" value="1"/>
</dbReference>
<keyword id="KW-1185">Reference proteome</keyword>
<comment type="similarity">
    <text evidence="2">To M.tuberculosis Rv1991c and Rv3269.</text>
</comment>
<comment type="sequence caution" evidence="2">
    <conflict type="erroneous initiation">
        <sequence resource="EMBL-CDS" id="AAK45245"/>
    </conflict>
</comment>
<proteinExistence type="predicted"/>
<accession>P9WKL8</accession>
<accession>L0T889</accession>
<accession>P64779</accession>
<accession>P71542</accession>
<name>Y968_MYCTO</name>
<reference key="1">
    <citation type="journal article" date="2002" name="J. Bacteriol.">
        <title>Whole-genome comparison of Mycobacterium tuberculosis clinical and laboratory strains.</title>
        <authorList>
            <person name="Fleischmann R.D."/>
            <person name="Alland D."/>
            <person name="Eisen J.A."/>
            <person name="Carpenter L."/>
            <person name="White O."/>
            <person name="Peterson J.D."/>
            <person name="DeBoy R.T."/>
            <person name="Dodson R.J."/>
            <person name="Gwinn M.L."/>
            <person name="Haft D.H."/>
            <person name="Hickey E.K."/>
            <person name="Kolonay J.F."/>
            <person name="Nelson W.C."/>
            <person name="Umayam L.A."/>
            <person name="Ermolaeva M.D."/>
            <person name="Salzberg S.L."/>
            <person name="Delcher A."/>
            <person name="Utterback T.R."/>
            <person name="Weidman J.F."/>
            <person name="Khouri H.M."/>
            <person name="Gill J."/>
            <person name="Mikula A."/>
            <person name="Bishai W."/>
            <person name="Jacobs W.R. Jr."/>
            <person name="Venter J.C."/>
            <person name="Fraser C.M."/>
        </authorList>
    </citation>
    <scope>NUCLEOTIDE SEQUENCE [LARGE SCALE GENOMIC DNA]</scope>
    <source>
        <strain>CDC 1551 / Oshkosh</strain>
    </source>
</reference>
<gene>
    <name type="ordered locus">MT0996</name>
</gene>
<feature type="chain" id="PRO_0000427631" description="Uncharacterized protein MT0996">
    <location>
        <begin position="1"/>
        <end position="98"/>
    </location>
</feature>
<feature type="region of interest" description="Disordered" evidence="1">
    <location>
        <begin position="77"/>
        <end position="98"/>
    </location>
</feature>